<name>PYRB_CLASE</name>
<evidence type="ECO:0000255" key="1">
    <source>
        <dbReference type="HAMAP-Rule" id="MF_00001"/>
    </source>
</evidence>
<gene>
    <name evidence="1" type="primary">pyrB</name>
    <name type="ordered locus">CMS2033</name>
</gene>
<feature type="chain" id="PRO_1000073723" description="Aspartate carbamoyltransferase catalytic subunit">
    <location>
        <begin position="1"/>
        <end position="318"/>
    </location>
</feature>
<feature type="binding site" evidence="1">
    <location>
        <position position="54"/>
    </location>
    <ligand>
        <name>carbamoyl phosphate</name>
        <dbReference type="ChEBI" id="CHEBI:58228"/>
    </ligand>
</feature>
<feature type="binding site" evidence="1">
    <location>
        <position position="55"/>
    </location>
    <ligand>
        <name>carbamoyl phosphate</name>
        <dbReference type="ChEBI" id="CHEBI:58228"/>
    </ligand>
</feature>
<feature type="binding site" evidence="1">
    <location>
        <position position="82"/>
    </location>
    <ligand>
        <name>L-aspartate</name>
        <dbReference type="ChEBI" id="CHEBI:29991"/>
    </ligand>
</feature>
<feature type="binding site" evidence="1">
    <location>
        <position position="104"/>
    </location>
    <ligand>
        <name>carbamoyl phosphate</name>
        <dbReference type="ChEBI" id="CHEBI:58228"/>
    </ligand>
</feature>
<feature type="binding site" evidence="1">
    <location>
        <position position="134"/>
    </location>
    <ligand>
        <name>carbamoyl phosphate</name>
        <dbReference type="ChEBI" id="CHEBI:58228"/>
    </ligand>
</feature>
<feature type="binding site" evidence="1">
    <location>
        <position position="137"/>
    </location>
    <ligand>
        <name>carbamoyl phosphate</name>
        <dbReference type="ChEBI" id="CHEBI:58228"/>
    </ligand>
</feature>
<feature type="binding site" evidence="1">
    <location>
        <position position="174"/>
    </location>
    <ligand>
        <name>L-aspartate</name>
        <dbReference type="ChEBI" id="CHEBI:29991"/>
    </ligand>
</feature>
<feature type="binding site" evidence="1">
    <location>
        <position position="230"/>
    </location>
    <ligand>
        <name>L-aspartate</name>
        <dbReference type="ChEBI" id="CHEBI:29991"/>
    </ligand>
</feature>
<feature type="binding site" evidence="1">
    <location>
        <position position="271"/>
    </location>
    <ligand>
        <name>carbamoyl phosphate</name>
        <dbReference type="ChEBI" id="CHEBI:58228"/>
    </ligand>
</feature>
<feature type="binding site" evidence="1">
    <location>
        <position position="272"/>
    </location>
    <ligand>
        <name>carbamoyl phosphate</name>
        <dbReference type="ChEBI" id="CHEBI:58228"/>
    </ligand>
</feature>
<accession>B0REW3</accession>
<sequence>MRHLLSTRDLSRDEAVRILDVAEDMADVGTREIKKTPALRGRTVVNLFFEDSTRTRISFEAAAKRLSADVINFSAKGSSVSKGESLKDTAQTLQAMGADGVVVRHPSSGAPHTLAGSGWIDAGIVNAGDGTHEHPTQALLDAFTIRRRLHGSAARGKGLDGTRVVIVGDVLHSRVARSNAWLLTTLGAEVTLVAPPTLVPVGVGSWPVTVRYDLDAALRDGAPDAVMMLRIQAERMRAAFFPNPREYARIWGLDDARLALLGPDTIVMHPGPMNRGLEISAAAADSERSTVREQVANGVSVRMAVLYLLLSGDGKADR</sequence>
<dbReference type="EC" id="2.1.3.2" evidence="1"/>
<dbReference type="EMBL" id="AM849034">
    <property type="protein sequence ID" value="CAQ02129.1"/>
    <property type="molecule type" value="Genomic_DNA"/>
</dbReference>
<dbReference type="RefSeq" id="WP_012299355.1">
    <property type="nucleotide sequence ID" value="NZ_MZMN01000003.1"/>
</dbReference>
<dbReference type="SMR" id="B0REW3"/>
<dbReference type="STRING" id="31964.CMS2033"/>
<dbReference type="KEGG" id="cms:CMS2033"/>
<dbReference type="eggNOG" id="COG0540">
    <property type="taxonomic scope" value="Bacteria"/>
</dbReference>
<dbReference type="HOGENOM" id="CLU_043846_2_0_11"/>
<dbReference type="OrthoDB" id="9774690at2"/>
<dbReference type="UniPathway" id="UPA00070">
    <property type="reaction ID" value="UER00116"/>
</dbReference>
<dbReference type="Proteomes" id="UP000001318">
    <property type="component" value="Chromosome"/>
</dbReference>
<dbReference type="GO" id="GO:0005829">
    <property type="term" value="C:cytosol"/>
    <property type="evidence" value="ECO:0007669"/>
    <property type="project" value="TreeGrafter"/>
</dbReference>
<dbReference type="GO" id="GO:0016597">
    <property type="term" value="F:amino acid binding"/>
    <property type="evidence" value="ECO:0007669"/>
    <property type="project" value="InterPro"/>
</dbReference>
<dbReference type="GO" id="GO:0004070">
    <property type="term" value="F:aspartate carbamoyltransferase activity"/>
    <property type="evidence" value="ECO:0007669"/>
    <property type="project" value="UniProtKB-UniRule"/>
</dbReference>
<dbReference type="GO" id="GO:0006207">
    <property type="term" value="P:'de novo' pyrimidine nucleobase biosynthetic process"/>
    <property type="evidence" value="ECO:0007669"/>
    <property type="project" value="InterPro"/>
</dbReference>
<dbReference type="GO" id="GO:0044205">
    <property type="term" value="P:'de novo' UMP biosynthetic process"/>
    <property type="evidence" value="ECO:0007669"/>
    <property type="project" value="UniProtKB-UniRule"/>
</dbReference>
<dbReference type="GO" id="GO:0006520">
    <property type="term" value="P:amino acid metabolic process"/>
    <property type="evidence" value="ECO:0007669"/>
    <property type="project" value="InterPro"/>
</dbReference>
<dbReference type="FunFam" id="3.40.50.1370:FF:000007">
    <property type="entry name" value="Aspartate carbamoyltransferase"/>
    <property type="match status" value="1"/>
</dbReference>
<dbReference type="FunFam" id="3.40.50.1370:FF:000012">
    <property type="entry name" value="Aspartate carbamoyltransferase"/>
    <property type="match status" value="1"/>
</dbReference>
<dbReference type="Gene3D" id="3.40.50.1370">
    <property type="entry name" value="Aspartate/ornithine carbamoyltransferase"/>
    <property type="match status" value="2"/>
</dbReference>
<dbReference type="HAMAP" id="MF_00001">
    <property type="entry name" value="Asp_carb_tr"/>
    <property type="match status" value="1"/>
</dbReference>
<dbReference type="InterPro" id="IPR006132">
    <property type="entry name" value="Asp/Orn_carbamoyltranf_P-bd"/>
</dbReference>
<dbReference type="InterPro" id="IPR006130">
    <property type="entry name" value="Asp/Orn_carbamoylTrfase"/>
</dbReference>
<dbReference type="InterPro" id="IPR036901">
    <property type="entry name" value="Asp/Orn_carbamoylTrfase_sf"/>
</dbReference>
<dbReference type="InterPro" id="IPR002082">
    <property type="entry name" value="Asp_carbamoyltransf"/>
</dbReference>
<dbReference type="InterPro" id="IPR006131">
    <property type="entry name" value="Asp_carbamoyltransf_Asp/Orn-bd"/>
</dbReference>
<dbReference type="NCBIfam" id="TIGR00670">
    <property type="entry name" value="asp_carb_tr"/>
    <property type="match status" value="1"/>
</dbReference>
<dbReference type="NCBIfam" id="NF002032">
    <property type="entry name" value="PRK00856.1"/>
    <property type="match status" value="1"/>
</dbReference>
<dbReference type="PANTHER" id="PTHR45753:SF6">
    <property type="entry name" value="ASPARTATE CARBAMOYLTRANSFERASE"/>
    <property type="match status" value="1"/>
</dbReference>
<dbReference type="PANTHER" id="PTHR45753">
    <property type="entry name" value="ORNITHINE CARBAMOYLTRANSFERASE, MITOCHONDRIAL"/>
    <property type="match status" value="1"/>
</dbReference>
<dbReference type="Pfam" id="PF00185">
    <property type="entry name" value="OTCace"/>
    <property type="match status" value="1"/>
</dbReference>
<dbReference type="Pfam" id="PF02729">
    <property type="entry name" value="OTCace_N"/>
    <property type="match status" value="1"/>
</dbReference>
<dbReference type="PRINTS" id="PR00100">
    <property type="entry name" value="AOTCASE"/>
</dbReference>
<dbReference type="PRINTS" id="PR00101">
    <property type="entry name" value="ATCASE"/>
</dbReference>
<dbReference type="SUPFAM" id="SSF53671">
    <property type="entry name" value="Aspartate/ornithine carbamoyltransferase"/>
    <property type="match status" value="1"/>
</dbReference>
<dbReference type="PROSITE" id="PS00097">
    <property type="entry name" value="CARBAMOYLTRANSFERASE"/>
    <property type="match status" value="1"/>
</dbReference>
<protein>
    <recommendedName>
        <fullName evidence="1">Aspartate carbamoyltransferase catalytic subunit</fullName>
        <ecNumber evidence="1">2.1.3.2</ecNumber>
    </recommendedName>
    <alternativeName>
        <fullName evidence="1">Aspartate transcarbamylase</fullName>
        <shortName evidence="1">ATCase</shortName>
    </alternativeName>
</protein>
<comment type="function">
    <text evidence="1">Catalyzes the condensation of carbamoyl phosphate and aspartate to form carbamoyl aspartate and inorganic phosphate, the committed step in the de novo pyrimidine nucleotide biosynthesis pathway.</text>
</comment>
<comment type="catalytic activity">
    <reaction evidence="1">
        <text>carbamoyl phosphate + L-aspartate = N-carbamoyl-L-aspartate + phosphate + H(+)</text>
        <dbReference type="Rhea" id="RHEA:20013"/>
        <dbReference type="ChEBI" id="CHEBI:15378"/>
        <dbReference type="ChEBI" id="CHEBI:29991"/>
        <dbReference type="ChEBI" id="CHEBI:32814"/>
        <dbReference type="ChEBI" id="CHEBI:43474"/>
        <dbReference type="ChEBI" id="CHEBI:58228"/>
        <dbReference type="EC" id="2.1.3.2"/>
    </reaction>
</comment>
<comment type="pathway">
    <text evidence="1">Pyrimidine metabolism; UMP biosynthesis via de novo pathway; (S)-dihydroorotate from bicarbonate: step 2/3.</text>
</comment>
<comment type="subunit">
    <text evidence="1">Heterododecamer (2C3:3R2) of six catalytic PyrB chains organized as two trimers (C3), and six regulatory PyrI chains organized as three dimers (R2).</text>
</comment>
<comment type="similarity">
    <text evidence="1">Belongs to the aspartate/ornithine carbamoyltransferase superfamily. ATCase family.</text>
</comment>
<organism>
    <name type="scientific">Clavibacter sepedonicus</name>
    <name type="common">Clavibacter michiganensis subsp. sepedonicus</name>
    <dbReference type="NCBI Taxonomy" id="31964"/>
    <lineage>
        <taxon>Bacteria</taxon>
        <taxon>Bacillati</taxon>
        <taxon>Actinomycetota</taxon>
        <taxon>Actinomycetes</taxon>
        <taxon>Micrococcales</taxon>
        <taxon>Microbacteriaceae</taxon>
        <taxon>Clavibacter</taxon>
    </lineage>
</organism>
<proteinExistence type="inferred from homology"/>
<keyword id="KW-0665">Pyrimidine biosynthesis</keyword>
<keyword id="KW-0808">Transferase</keyword>
<reference key="1">
    <citation type="journal article" date="2008" name="J. Bacteriol.">
        <title>Genome of the actinomycete plant pathogen Clavibacter michiganensis subsp. sepedonicus suggests recent niche adaptation.</title>
        <authorList>
            <person name="Bentley S.D."/>
            <person name="Corton C."/>
            <person name="Brown S.E."/>
            <person name="Barron A."/>
            <person name="Clark L."/>
            <person name="Doggett J."/>
            <person name="Harris B."/>
            <person name="Ormond D."/>
            <person name="Quail M.A."/>
            <person name="May G."/>
            <person name="Francis D."/>
            <person name="Knudson D."/>
            <person name="Parkhill J."/>
            <person name="Ishimaru C.A."/>
        </authorList>
    </citation>
    <scope>NUCLEOTIDE SEQUENCE [LARGE SCALE GENOMIC DNA]</scope>
    <source>
        <strain>ATCC 33113 / DSM 20744 / JCM 9667 / LMG 2889 / ICMP 2535 / C-1</strain>
    </source>
</reference>